<protein>
    <recommendedName>
        <fullName>WD repeat-containing protein 88</fullName>
    </recommendedName>
    <alternativeName>
        <fullName>PQQ repeat and WD repeat-containing protein</fullName>
    </alternativeName>
</protein>
<keyword id="KW-0025">Alternative splicing</keyword>
<keyword id="KW-1267">Proteomics identification</keyword>
<keyword id="KW-1185">Reference proteome</keyword>
<keyword id="KW-0677">Repeat</keyword>
<keyword id="KW-0853">WD repeat</keyword>
<sequence length="472" mass="52621">MASPPRCSPTAHDRECKLPPPSAPASEYCPGKLSWGTMARALGRFKLSIPHTHLLATLDPLALDREPPPHLLPEKHQVPEKLIWGDQDPLSKIPFKILSGHEHAVSTCHFCVDDTKLLSGSYDCTVKLWDPVDGSVVRDFEHRPKAPVVECSITGDSSRVIAASYDKTVRAWDLETGKLLWKVRYDTFIVSCKFSPDGKYVVSGFDVDHGICIMDAENITTVSVIKDHHTRSITSCCFDPDSQRVASVSLDRCIKIWDVTSQATLLTITKAHSNAISNCCFTFSGHFLCTSSWDKNLKIWNVHTGEFRNCGACVTLMQGHEGSVSSCHFARDSSFLISGGFDRTVAIWDVAEGYRKLSLKGHNDWVMDVAISNNKKWILSASKDRTMRLWNIEEIDEIPLVIKYKKAVGLKLKQCERCDRPFSIFKSDTSSEMFTQCVFCRIDTRGLPADTSSSSSSSERENSPPPRGSKDD</sequence>
<comment type="interaction">
    <interactant intactId="EBI-25857007">
        <id>Q6ZMY6-2</id>
    </interactant>
    <interactant intactId="EBI-852851">
        <id>P01100</id>
        <label>FOS</label>
    </interactant>
    <organismsDiffer>false</organismsDiffer>
    <experiments>3</experiments>
</comment>
<comment type="interaction">
    <interactant intactId="EBI-25857007">
        <id>Q6ZMY6-2</id>
    </interactant>
    <interactant intactId="EBI-2552594">
        <id>P50440</id>
        <label>GATM</label>
    </interactant>
    <organismsDiffer>false</organismsDiffer>
    <experiments>3</experiments>
</comment>
<comment type="interaction">
    <interactant intactId="EBI-25857007">
        <id>Q6ZMY6-2</id>
    </interactant>
    <interactant intactId="EBI-719620">
        <id>Q00613</id>
        <label>HSF1</label>
    </interactant>
    <organismsDiffer>false</organismsDiffer>
    <experiments>3</experiments>
</comment>
<comment type="interaction">
    <interactant intactId="EBI-25857007">
        <id>Q6ZMY6-2</id>
    </interactant>
    <interactant intactId="EBI-25894402">
        <id>P14679-2</id>
        <label>TYR</label>
    </interactant>
    <organismsDiffer>false</organismsDiffer>
    <experiments>3</experiments>
</comment>
<comment type="interaction">
    <interactant intactId="EBI-25857007">
        <id>Q6ZMY6-2</id>
    </interactant>
    <interactant intactId="EBI-1052596">
        <id>P31930</id>
        <label>UQCRC1</label>
    </interactant>
    <organismsDiffer>false</organismsDiffer>
    <experiments>3</experiments>
</comment>
<comment type="alternative products">
    <event type="alternative splicing"/>
    <isoform>
        <id>Q6ZMY6-1</id>
        <name>1</name>
        <sequence type="displayed"/>
    </isoform>
    <isoform>
        <id>Q6ZMY6-2</id>
        <name>2</name>
        <sequence type="described" ref="VSP_024873"/>
    </isoform>
</comment>
<comment type="sequence caution" evidence="5">
    <conflict type="erroneous initiation">
        <sequence resource="EMBL-CDS" id="AAH31227"/>
    </conflict>
    <text>Extended N-terminus.</text>
</comment>
<accession>Q6ZMY6</accession>
<accession>Q8NEF8</accession>
<name>WDR88_HUMAN</name>
<gene>
    <name type="primary">WDR88</name>
    <name type="synonym">PQWD</name>
</gene>
<proteinExistence type="evidence at protein level"/>
<evidence type="ECO:0000256" key="1">
    <source>
        <dbReference type="SAM" id="MobiDB-lite"/>
    </source>
</evidence>
<evidence type="ECO:0000269" key="2">
    <source>
    </source>
</evidence>
<evidence type="ECO:0000269" key="3">
    <source>
    </source>
</evidence>
<evidence type="ECO:0000303" key="4">
    <source>
    </source>
</evidence>
<evidence type="ECO:0000305" key="5"/>
<organism>
    <name type="scientific">Homo sapiens</name>
    <name type="common">Human</name>
    <dbReference type="NCBI Taxonomy" id="9606"/>
    <lineage>
        <taxon>Eukaryota</taxon>
        <taxon>Metazoa</taxon>
        <taxon>Chordata</taxon>
        <taxon>Craniata</taxon>
        <taxon>Vertebrata</taxon>
        <taxon>Euteleostomi</taxon>
        <taxon>Mammalia</taxon>
        <taxon>Eutheria</taxon>
        <taxon>Euarchontoglires</taxon>
        <taxon>Primates</taxon>
        <taxon>Haplorrhini</taxon>
        <taxon>Catarrhini</taxon>
        <taxon>Hominidae</taxon>
        <taxon>Homo</taxon>
    </lineage>
</organism>
<dbReference type="EMBL" id="AK131444">
    <property type="protein sequence ID" value="BAD18589.1"/>
    <property type="molecule type" value="mRNA"/>
</dbReference>
<dbReference type="EMBL" id="AC008738">
    <property type="status" value="NOT_ANNOTATED_CDS"/>
    <property type="molecule type" value="Genomic_DNA"/>
</dbReference>
<dbReference type="EMBL" id="BC031227">
    <property type="protein sequence ID" value="AAH31227.2"/>
    <property type="status" value="ALT_INIT"/>
    <property type="molecule type" value="mRNA"/>
</dbReference>
<dbReference type="CCDS" id="CCDS12429.1">
    <molecule id="Q6ZMY6-1"/>
</dbReference>
<dbReference type="RefSeq" id="NP_775750.3">
    <molecule id="Q6ZMY6-1"/>
    <property type="nucleotide sequence ID" value="NM_173479.3"/>
</dbReference>
<dbReference type="SMR" id="Q6ZMY6"/>
<dbReference type="BioGRID" id="125970">
    <property type="interactions" value="3"/>
</dbReference>
<dbReference type="IntAct" id="Q6ZMY6">
    <property type="interactions" value="20"/>
</dbReference>
<dbReference type="STRING" id="9606.ENSP00000348129"/>
<dbReference type="iPTMnet" id="Q6ZMY6"/>
<dbReference type="PhosphoSitePlus" id="Q6ZMY6"/>
<dbReference type="BioMuta" id="WDR88"/>
<dbReference type="DMDM" id="296453028"/>
<dbReference type="MassIVE" id="Q6ZMY6"/>
<dbReference type="PaxDb" id="9606-ENSP00000348129"/>
<dbReference type="PeptideAtlas" id="Q6ZMY6"/>
<dbReference type="ProteomicsDB" id="67936">
    <molecule id="Q6ZMY6-1"/>
</dbReference>
<dbReference type="ProteomicsDB" id="67937">
    <molecule id="Q6ZMY6-2"/>
</dbReference>
<dbReference type="Antibodypedia" id="47947">
    <property type="antibodies" value="86 antibodies from 13 providers"/>
</dbReference>
<dbReference type="DNASU" id="126248"/>
<dbReference type="Ensembl" id="ENST00000355868.4">
    <molecule id="Q6ZMY6-1"/>
    <property type="protein sequence ID" value="ENSP00000348129.2"/>
    <property type="gene ID" value="ENSG00000166359.11"/>
</dbReference>
<dbReference type="Ensembl" id="ENST00000361680.6">
    <molecule id="Q6ZMY6-2"/>
    <property type="protein sequence ID" value="ENSP00000355148.2"/>
    <property type="gene ID" value="ENSG00000166359.11"/>
</dbReference>
<dbReference type="GeneID" id="126248"/>
<dbReference type="KEGG" id="hsa:126248"/>
<dbReference type="MANE-Select" id="ENST00000355868.4">
    <property type="protein sequence ID" value="ENSP00000348129.2"/>
    <property type="RefSeq nucleotide sequence ID" value="NM_173479.4"/>
    <property type="RefSeq protein sequence ID" value="NP_775750.3"/>
</dbReference>
<dbReference type="UCSC" id="uc002nui.4">
    <molecule id="Q6ZMY6-1"/>
    <property type="organism name" value="human"/>
</dbReference>
<dbReference type="AGR" id="HGNC:26999"/>
<dbReference type="CTD" id="126248"/>
<dbReference type="GeneCards" id="WDR88"/>
<dbReference type="HGNC" id="HGNC:26999">
    <property type="gene designation" value="WDR88"/>
</dbReference>
<dbReference type="HPA" id="ENSG00000166359">
    <property type="expression patterns" value="Tissue enriched (testis)"/>
</dbReference>
<dbReference type="neXtProt" id="NX_Q6ZMY6"/>
<dbReference type="OpenTargets" id="ENSG00000166359"/>
<dbReference type="PharmGKB" id="PA162409139"/>
<dbReference type="VEuPathDB" id="HostDB:ENSG00000166359"/>
<dbReference type="eggNOG" id="KOG0266">
    <property type="taxonomic scope" value="Eukaryota"/>
</dbReference>
<dbReference type="GeneTree" id="ENSGT00940000162291"/>
<dbReference type="HOGENOM" id="CLU_000288_57_3_1"/>
<dbReference type="InParanoid" id="Q6ZMY6"/>
<dbReference type="OMA" id="WDAMDGS"/>
<dbReference type="OrthoDB" id="538223at2759"/>
<dbReference type="PAN-GO" id="Q6ZMY6">
    <property type="GO annotations" value="0 GO annotations based on evolutionary models"/>
</dbReference>
<dbReference type="PhylomeDB" id="Q6ZMY6"/>
<dbReference type="TreeFam" id="TF300039"/>
<dbReference type="PathwayCommons" id="Q6ZMY6"/>
<dbReference type="SignaLink" id="Q6ZMY6"/>
<dbReference type="BioGRID-ORCS" id="126248">
    <property type="hits" value="35 hits in 1141 CRISPR screens"/>
</dbReference>
<dbReference type="ChiTaRS" id="WDR88">
    <property type="organism name" value="human"/>
</dbReference>
<dbReference type="GenomeRNAi" id="126248"/>
<dbReference type="Pharos" id="Q6ZMY6">
    <property type="development level" value="Tdark"/>
</dbReference>
<dbReference type="PRO" id="PR:Q6ZMY6"/>
<dbReference type="Proteomes" id="UP000005640">
    <property type="component" value="Chromosome 19"/>
</dbReference>
<dbReference type="RNAct" id="Q6ZMY6">
    <property type="molecule type" value="protein"/>
</dbReference>
<dbReference type="Bgee" id="ENSG00000166359">
    <property type="expression patterns" value="Expressed in male germ line stem cell (sensu Vertebrata) in testis and 94 other cell types or tissues"/>
</dbReference>
<dbReference type="ExpressionAtlas" id="Q6ZMY6">
    <property type="expression patterns" value="baseline and differential"/>
</dbReference>
<dbReference type="CDD" id="cd00200">
    <property type="entry name" value="WD40"/>
    <property type="match status" value="1"/>
</dbReference>
<dbReference type="Gene3D" id="2.130.10.10">
    <property type="entry name" value="YVTN repeat-like/Quinoprotein amine dehydrogenase"/>
    <property type="match status" value="3"/>
</dbReference>
<dbReference type="InterPro" id="IPR020472">
    <property type="entry name" value="G-protein_beta_WD-40_rep"/>
</dbReference>
<dbReference type="InterPro" id="IPR018391">
    <property type="entry name" value="PQQ_b-propeller_rpt"/>
</dbReference>
<dbReference type="InterPro" id="IPR011047">
    <property type="entry name" value="Quinoprotein_ADH-like_sf"/>
</dbReference>
<dbReference type="InterPro" id="IPR015943">
    <property type="entry name" value="WD40/YVTN_repeat-like_dom_sf"/>
</dbReference>
<dbReference type="InterPro" id="IPR019775">
    <property type="entry name" value="WD40_repeat_CS"/>
</dbReference>
<dbReference type="InterPro" id="IPR001680">
    <property type="entry name" value="WD40_rpt"/>
</dbReference>
<dbReference type="PANTHER" id="PTHR45048">
    <property type="match status" value="1"/>
</dbReference>
<dbReference type="PANTHER" id="PTHR45048:SF1">
    <property type="entry name" value="WD REPEAT-CONTAINING PROTEIN 88"/>
    <property type="match status" value="1"/>
</dbReference>
<dbReference type="Pfam" id="PF00400">
    <property type="entry name" value="WD40"/>
    <property type="match status" value="7"/>
</dbReference>
<dbReference type="PRINTS" id="PR00320">
    <property type="entry name" value="GPROTEINBRPT"/>
</dbReference>
<dbReference type="SMART" id="SM00564">
    <property type="entry name" value="PQQ"/>
    <property type="match status" value="1"/>
</dbReference>
<dbReference type="SMART" id="SM00320">
    <property type="entry name" value="WD40"/>
    <property type="match status" value="7"/>
</dbReference>
<dbReference type="SUPFAM" id="SSF50998">
    <property type="entry name" value="Quinoprotein alcohol dehydrogenase-like"/>
    <property type="match status" value="1"/>
</dbReference>
<dbReference type="PROSITE" id="PS00678">
    <property type="entry name" value="WD_REPEATS_1"/>
    <property type="match status" value="5"/>
</dbReference>
<dbReference type="PROSITE" id="PS50082">
    <property type="entry name" value="WD_REPEATS_2"/>
    <property type="match status" value="6"/>
</dbReference>
<dbReference type="PROSITE" id="PS50294">
    <property type="entry name" value="WD_REPEATS_REGION"/>
    <property type="match status" value="1"/>
</dbReference>
<reference key="1">
    <citation type="journal article" date="2004" name="Nat. Genet.">
        <title>Complete sequencing and characterization of 21,243 full-length human cDNAs.</title>
        <authorList>
            <person name="Ota T."/>
            <person name="Suzuki Y."/>
            <person name="Nishikawa T."/>
            <person name="Otsuki T."/>
            <person name="Sugiyama T."/>
            <person name="Irie R."/>
            <person name="Wakamatsu A."/>
            <person name="Hayashi K."/>
            <person name="Sato H."/>
            <person name="Nagai K."/>
            <person name="Kimura K."/>
            <person name="Makita H."/>
            <person name="Sekine M."/>
            <person name="Obayashi M."/>
            <person name="Nishi T."/>
            <person name="Shibahara T."/>
            <person name="Tanaka T."/>
            <person name="Ishii S."/>
            <person name="Yamamoto J."/>
            <person name="Saito K."/>
            <person name="Kawai Y."/>
            <person name="Isono Y."/>
            <person name="Nakamura Y."/>
            <person name="Nagahari K."/>
            <person name="Murakami K."/>
            <person name="Yasuda T."/>
            <person name="Iwayanagi T."/>
            <person name="Wagatsuma M."/>
            <person name="Shiratori A."/>
            <person name="Sudo H."/>
            <person name="Hosoiri T."/>
            <person name="Kaku Y."/>
            <person name="Kodaira H."/>
            <person name="Kondo H."/>
            <person name="Sugawara M."/>
            <person name="Takahashi M."/>
            <person name="Kanda K."/>
            <person name="Yokoi T."/>
            <person name="Furuya T."/>
            <person name="Kikkawa E."/>
            <person name="Omura Y."/>
            <person name="Abe K."/>
            <person name="Kamihara K."/>
            <person name="Katsuta N."/>
            <person name="Sato K."/>
            <person name="Tanikawa M."/>
            <person name="Yamazaki M."/>
            <person name="Ninomiya K."/>
            <person name="Ishibashi T."/>
            <person name="Yamashita H."/>
            <person name="Murakawa K."/>
            <person name="Fujimori K."/>
            <person name="Tanai H."/>
            <person name="Kimata M."/>
            <person name="Watanabe M."/>
            <person name="Hiraoka S."/>
            <person name="Chiba Y."/>
            <person name="Ishida S."/>
            <person name="Ono Y."/>
            <person name="Takiguchi S."/>
            <person name="Watanabe S."/>
            <person name="Yosida M."/>
            <person name="Hotuta T."/>
            <person name="Kusano J."/>
            <person name="Kanehori K."/>
            <person name="Takahashi-Fujii A."/>
            <person name="Hara H."/>
            <person name="Tanase T.-O."/>
            <person name="Nomura Y."/>
            <person name="Togiya S."/>
            <person name="Komai F."/>
            <person name="Hara R."/>
            <person name="Takeuchi K."/>
            <person name="Arita M."/>
            <person name="Imose N."/>
            <person name="Musashino K."/>
            <person name="Yuuki H."/>
            <person name="Oshima A."/>
            <person name="Sasaki N."/>
            <person name="Aotsuka S."/>
            <person name="Yoshikawa Y."/>
            <person name="Matsunawa H."/>
            <person name="Ichihara T."/>
            <person name="Shiohata N."/>
            <person name="Sano S."/>
            <person name="Moriya S."/>
            <person name="Momiyama H."/>
            <person name="Satoh N."/>
            <person name="Takami S."/>
            <person name="Terashima Y."/>
            <person name="Suzuki O."/>
            <person name="Nakagawa S."/>
            <person name="Senoh A."/>
            <person name="Mizoguchi H."/>
            <person name="Goto Y."/>
            <person name="Shimizu F."/>
            <person name="Wakebe H."/>
            <person name="Hishigaki H."/>
            <person name="Watanabe T."/>
            <person name="Sugiyama A."/>
            <person name="Takemoto M."/>
            <person name="Kawakami B."/>
            <person name="Yamazaki M."/>
            <person name="Watanabe K."/>
            <person name="Kumagai A."/>
            <person name="Itakura S."/>
            <person name="Fukuzumi Y."/>
            <person name="Fujimori Y."/>
            <person name="Komiyama M."/>
            <person name="Tashiro H."/>
            <person name="Tanigami A."/>
            <person name="Fujiwara T."/>
            <person name="Ono T."/>
            <person name="Yamada K."/>
            <person name="Fujii Y."/>
            <person name="Ozaki K."/>
            <person name="Hirao M."/>
            <person name="Ohmori Y."/>
            <person name="Kawabata A."/>
            <person name="Hikiji T."/>
            <person name="Kobatake N."/>
            <person name="Inagaki H."/>
            <person name="Ikema Y."/>
            <person name="Okamoto S."/>
            <person name="Okitani R."/>
            <person name="Kawakami T."/>
            <person name="Noguchi S."/>
            <person name="Itoh T."/>
            <person name="Shigeta K."/>
            <person name="Senba T."/>
            <person name="Matsumura K."/>
            <person name="Nakajima Y."/>
            <person name="Mizuno T."/>
            <person name="Morinaga M."/>
            <person name="Sasaki M."/>
            <person name="Togashi T."/>
            <person name="Oyama M."/>
            <person name="Hata H."/>
            <person name="Watanabe M."/>
            <person name="Komatsu T."/>
            <person name="Mizushima-Sugano J."/>
            <person name="Satoh T."/>
            <person name="Shirai Y."/>
            <person name="Takahashi Y."/>
            <person name="Nakagawa K."/>
            <person name="Okumura K."/>
            <person name="Nagase T."/>
            <person name="Nomura N."/>
            <person name="Kikuchi H."/>
            <person name="Masuho Y."/>
            <person name="Yamashita R."/>
            <person name="Nakai K."/>
            <person name="Yada T."/>
            <person name="Nakamura Y."/>
            <person name="Ohara O."/>
            <person name="Isogai T."/>
            <person name="Sugano S."/>
        </authorList>
    </citation>
    <scope>NUCLEOTIDE SEQUENCE [LARGE SCALE MRNA] (ISOFORM 1)</scope>
    <scope>VARIANT ARG-310</scope>
    <source>
        <tissue>Testis</tissue>
    </source>
</reference>
<reference key="2">
    <citation type="journal article" date="2004" name="Nature">
        <title>The DNA sequence and biology of human chromosome 19.</title>
        <authorList>
            <person name="Grimwood J."/>
            <person name="Gordon L.A."/>
            <person name="Olsen A.S."/>
            <person name="Terry A."/>
            <person name="Schmutz J."/>
            <person name="Lamerdin J.E."/>
            <person name="Hellsten U."/>
            <person name="Goodstein D."/>
            <person name="Couronne O."/>
            <person name="Tran-Gyamfi M."/>
            <person name="Aerts A."/>
            <person name="Altherr M."/>
            <person name="Ashworth L."/>
            <person name="Bajorek E."/>
            <person name="Black S."/>
            <person name="Branscomb E."/>
            <person name="Caenepeel S."/>
            <person name="Carrano A.V."/>
            <person name="Caoile C."/>
            <person name="Chan Y.M."/>
            <person name="Christensen M."/>
            <person name="Cleland C.A."/>
            <person name="Copeland A."/>
            <person name="Dalin E."/>
            <person name="Dehal P."/>
            <person name="Denys M."/>
            <person name="Detter J.C."/>
            <person name="Escobar J."/>
            <person name="Flowers D."/>
            <person name="Fotopulos D."/>
            <person name="Garcia C."/>
            <person name="Georgescu A.M."/>
            <person name="Glavina T."/>
            <person name="Gomez M."/>
            <person name="Gonzales E."/>
            <person name="Groza M."/>
            <person name="Hammon N."/>
            <person name="Hawkins T."/>
            <person name="Haydu L."/>
            <person name="Ho I."/>
            <person name="Huang W."/>
            <person name="Israni S."/>
            <person name="Jett J."/>
            <person name="Kadner K."/>
            <person name="Kimball H."/>
            <person name="Kobayashi A."/>
            <person name="Larionov V."/>
            <person name="Leem S.-H."/>
            <person name="Lopez F."/>
            <person name="Lou Y."/>
            <person name="Lowry S."/>
            <person name="Malfatti S."/>
            <person name="Martinez D."/>
            <person name="McCready P.M."/>
            <person name="Medina C."/>
            <person name="Morgan J."/>
            <person name="Nelson K."/>
            <person name="Nolan M."/>
            <person name="Ovcharenko I."/>
            <person name="Pitluck S."/>
            <person name="Pollard M."/>
            <person name="Popkie A.P."/>
            <person name="Predki P."/>
            <person name="Quan G."/>
            <person name="Ramirez L."/>
            <person name="Rash S."/>
            <person name="Retterer J."/>
            <person name="Rodriguez A."/>
            <person name="Rogers S."/>
            <person name="Salamov A."/>
            <person name="Salazar A."/>
            <person name="She X."/>
            <person name="Smith D."/>
            <person name="Slezak T."/>
            <person name="Solovyev V."/>
            <person name="Thayer N."/>
            <person name="Tice H."/>
            <person name="Tsai M."/>
            <person name="Ustaszewska A."/>
            <person name="Vo N."/>
            <person name="Wagner M."/>
            <person name="Wheeler J."/>
            <person name="Wu K."/>
            <person name="Xie G."/>
            <person name="Yang J."/>
            <person name="Dubchak I."/>
            <person name="Furey T.S."/>
            <person name="DeJong P."/>
            <person name="Dickson M."/>
            <person name="Gordon D."/>
            <person name="Eichler E.E."/>
            <person name="Pennacchio L.A."/>
            <person name="Richardson P."/>
            <person name="Stubbs L."/>
            <person name="Rokhsar D.S."/>
            <person name="Myers R.M."/>
            <person name="Rubin E.M."/>
            <person name="Lucas S.M."/>
        </authorList>
    </citation>
    <scope>NUCLEOTIDE SEQUENCE [LARGE SCALE GENOMIC DNA]</scope>
</reference>
<reference key="3">
    <citation type="journal article" date="2004" name="Genome Res.">
        <title>The status, quality, and expansion of the NIH full-length cDNA project: the Mammalian Gene Collection (MGC).</title>
        <authorList>
            <consortium name="The MGC Project Team"/>
        </authorList>
    </citation>
    <scope>NUCLEOTIDE SEQUENCE [LARGE SCALE MRNA] (ISOFORM 2)</scope>
    <source>
        <tissue>Testis</tissue>
    </source>
</reference>
<reference key="4">
    <citation type="journal article" date="2006" name="Science">
        <title>The consensus coding sequences of human breast and colorectal cancers.</title>
        <authorList>
            <person name="Sjoeblom T."/>
            <person name="Jones S."/>
            <person name="Wood L.D."/>
            <person name="Parsons D.W."/>
            <person name="Lin J."/>
            <person name="Barber T.D."/>
            <person name="Mandelker D."/>
            <person name="Leary R.J."/>
            <person name="Ptak J."/>
            <person name="Silliman N."/>
            <person name="Szabo S."/>
            <person name="Buckhaults P."/>
            <person name="Farrell C."/>
            <person name="Meeh P."/>
            <person name="Markowitz S.D."/>
            <person name="Willis J."/>
            <person name="Dawson D."/>
            <person name="Willson J.K.V."/>
            <person name="Gazdar A.F."/>
            <person name="Hartigan J."/>
            <person name="Wu L."/>
            <person name="Liu C."/>
            <person name="Parmigiani G."/>
            <person name="Park B.H."/>
            <person name="Bachman K.E."/>
            <person name="Papadopoulos N."/>
            <person name="Vogelstein B."/>
            <person name="Kinzler K.W."/>
            <person name="Velculescu V.E."/>
        </authorList>
    </citation>
    <scope>VARIANT [LARGE SCALE ANALYSIS] HIS-166</scope>
</reference>
<feature type="chain" id="PRO_0000285630" description="WD repeat-containing protein 88">
    <location>
        <begin position="1"/>
        <end position="472"/>
    </location>
</feature>
<feature type="repeat" description="WD 1">
    <location>
        <begin position="100"/>
        <end position="139"/>
    </location>
</feature>
<feature type="repeat" description="WD 2">
    <location>
        <begin position="143"/>
        <end position="182"/>
    </location>
</feature>
<feature type="repeat" description="WD 3">
    <location>
        <begin position="184"/>
        <end position="224"/>
    </location>
</feature>
<feature type="repeat" description="WD 4">
    <location>
        <begin position="228"/>
        <end position="267"/>
    </location>
</feature>
<feature type="repeat" description="WD 5">
    <location>
        <begin position="271"/>
        <end position="310"/>
    </location>
</feature>
<feature type="repeat" description="WD 6">
    <location>
        <begin position="319"/>
        <end position="358"/>
    </location>
</feature>
<feature type="repeat" description="WD 7">
    <location>
        <begin position="361"/>
        <end position="400"/>
    </location>
</feature>
<feature type="region of interest" description="Disordered" evidence="1">
    <location>
        <begin position="1"/>
        <end position="22"/>
    </location>
</feature>
<feature type="region of interest" description="Disordered" evidence="1">
    <location>
        <begin position="447"/>
        <end position="472"/>
    </location>
</feature>
<feature type="compositionally biased region" description="Basic and acidic residues" evidence="1">
    <location>
        <begin position="458"/>
        <end position="472"/>
    </location>
</feature>
<feature type="splice variant" id="VSP_024873" description="In isoform 2." evidence="4">
    <original>CERCDRPFSIFKSDTSSEMFTQCVFCRIDTRGLPADTSSSSSSSERENSPPPRGSKDD</original>
    <variation>EKKEAYLKLKQG</variation>
    <location>
        <begin position="415"/>
        <end position="472"/>
    </location>
</feature>
<feature type="sequence variant" id="VAR_035892" description="In a breast cancer sample; somatic mutation." evidence="3">
    <original>D</original>
    <variation>H</variation>
    <location>
        <position position="166"/>
    </location>
</feature>
<feature type="sequence variant" id="VAR_032030" description="In dbSNP:rs11881580." evidence="2">
    <original>C</original>
    <variation>R</variation>
    <location>
        <position position="310"/>
    </location>
</feature>